<protein>
    <recommendedName>
        <fullName evidence="1">Crossover junction endodeoxyribonuclease RuvC</fullName>
        <ecNumber evidence="1">3.1.21.10</ecNumber>
    </recommendedName>
    <alternativeName>
        <fullName evidence="1">Holliday junction nuclease RuvC</fullName>
    </alternativeName>
    <alternativeName>
        <fullName evidence="1">Holliday junction resolvase RuvC</fullName>
    </alternativeName>
</protein>
<proteinExistence type="inferred from homology"/>
<reference key="1">
    <citation type="submission" date="2008-04" db="EMBL/GenBank/DDBJ databases">
        <title>Complete sequence of chromosome of Methylobacterium populi BJ001.</title>
        <authorList>
            <consortium name="US DOE Joint Genome Institute"/>
            <person name="Copeland A."/>
            <person name="Lucas S."/>
            <person name="Lapidus A."/>
            <person name="Glavina del Rio T."/>
            <person name="Dalin E."/>
            <person name="Tice H."/>
            <person name="Bruce D."/>
            <person name="Goodwin L."/>
            <person name="Pitluck S."/>
            <person name="Chertkov O."/>
            <person name="Brettin T."/>
            <person name="Detter J.C."/>
            <person name="Han C."/>
            <person name="Kuske C.R."/>
            <person name="Schmutz J."/>
            <person name="Larimer F."/>
            <person name="Land M."/>
            <person name="Hauser L."/>
            <person name="Kyrpides N."/>
            <person name="Mikhailova N."/>
            <person name="Marx C."/>
            <person name="Richardson P."/>
        </authorList>
    </citation>
    <scope>NUCLEOTIDE SEQUENCE [LARGE SCALE GENOMIC DNA]</scope>
    <source>
        <strain>ATCC BAA-705 / NCIMB 13946 / BJ001</strain>
    </source>
</reference>
<evidence type="ECO:0000255" key="1">
    <source>
        <dbReference type="HAMAP-Rule" id="MF_00034"/>
    </source>
</evidence>
<keyword id="KW-0963">Cytoplasm</keyword>
<keyword id="KW-0227">DNA damage</keyword>
<keyword id="KW-0233">DNA recombination</keyword>
<keyword id="KW-0234">DNA repair</keyword>
<keyword id="KW-0238">DNA-binding</keyword>
<keyword id="KW-0255">Endonuclease</keyword>
<keyword id="KW-0378">Hydrolase</keyword>
<keyword id="KW-0460">Magnesium</keyword>
<keyword id="KW-0479">Metal-binding</keyword>
<keyword id="KW-0540">Nuclease</keyword>
<comment type="function">
    <text evidence="1">The RuvA-RuvB-RuvC complex processes Holliday junction (HJ) DNA during genetic recombination and DNA repair. Endonuclease that resolves HJ intermediates. Cleaves cruciform DNA by making single-stranded nicks across the HJ at symmetrical positions within the homologous arms, yielding a 5'-phosphate and a 3'-hydroxyl group; requires a central core of homology in the junction. The consensus cleavage sequence is 5'-(A/T)TT(C/G)-3'. Cleavage occurs on the 3'-side of the TT dinucleotide at the point of strand exchange. HJ branch migration catalyzed by RuvA-RuvB allows RuvC to scan DNA until it finds its consensus sequence, where it cleaves and resolves the cruciform DNA.</text>
</comment>
<comment type="catalytic activity">
    <reaction evidence="1">
        <text>Endonucleolytic cleavage at a junction such as a reciprocal single-stranded crossover between two homologous DNA duplexes (Holliday junction).</text>
        <dbReference type="EC" id="3.1.21.10"/>
    </reaction>
</comment>
<comment type="cofactor">
    <cofactor evidence="1">
        <name>Mg(2+)</name>
        <dbReference type="ChEBI" id="CHEBI:18420"/>
    </cofactor>
    <text evidence="1">Binds 2 Mg(2+) ion per subunit.</text>
</comment>
<comment type="subunit">
    <text evidence="1">Homodimer which binds Holliday junction (HJ) DNA. The HJ becomes 2-fold symmetrical on binding to RuvC with unstacked arms; it has a different conformation from HJ DNA in complex with RuvA. In the full resolvosome a probable DNA-RuvA(4)-RuvB(12)-RuvC(2) complex forms which resolves the HJ.</text>
</comment>
<comment type="subcellular location">
    <subcellularLocation>
        <location evidence="1">Cytoplasm</location>
    </subcellularLocation>
</comment>
<comment type="similarity">
    <text evidence="1">Belongs to the RuvC family.</text>
</comment>
<sequence>MTTDVRILGIDPGLRRTGWGLITARGTKLSYLACGVVTSDGDLPLALRLRELHEGLTRVLTTHAPDEVSVEETFVNKDAQATLKLGHARAVALLVPALAGLPVAEYAANLVKKTVAGNGHAEKVQIQAMVKFLLPKAEFKLADAADALAIAITHASHRGAIALDRRHAVAAGSGPGAARIAAALARLDR</sequence>
<organism>
    <name type="scientific">Methylorubrum populi (strain ATCC BAA-705 / NCIMB 13946 / BJ001)</name>
    <name type="common">Methylobacterium populi</name>
    <dbReference type="NCBI Taxonomy" id="441620"/>
    <lineage>
        <taxon>Bacteria</taxon>
        <taxon>Pseudomonadati</taxon>
        <taxon>Pseudomonadota</taxon>
        <taxon>Alphaproteobacteria</taxon>
        <taxon>Hyphomicrobiales</taxon>
        <taxon>Methylobacteriaceae</taxon>
        <taxon>Methylorubrum</taxon>
    </lineage>
</organism>
<dbReference type="EC" id="3.1.21.10" evidence="1"/>
<dbReference type="EMBL" id="CP001029">
    <property type="protein sequence ID" value="ACB79080.1"/>
    <property type="molecule type" value="Genomic_DNA"/>
</dbReference>
<dbReference type="RefSeq" id="WP_012452836.1">
    <property type="nucleotide sequence ID" value="NC_010725.1"/>
</dbReference>
<dbReference type="SMR" id="B1Z922"/>
<dbReference type="STRING" id="441620.Mpop_0902"/>
<dbReference type="KEGG" id="mpo:Mpop_0902"/>
<dbReference type="eggNOG" id="COG0817">
    <property type="taxonomic scope" value="Bacteria"/>
</dbReference>
<dbReference type="HOGENOM" id="CLU_091257_1_0_5"/>
<dbReference type="OrthoDB" id="9805499at2"/>
<dbReference type="Proteomes" id="UP000007136">
    <property type="component" value="Chromosome"/>
</dbReference>
<dbReference type="GO" id="GO:0005737">
    <property type="term" value="C:cytoplasm"/>
    <property type="evidence" value="ECO:0007669"/>
    <property type="project" value="UniProtKB-SubCell"/>
</dbReference>
<dbReference type="GO" id="GO:0048476">
    <property type="term" value="C:Holliday junction resolvase complex"/>
    <property type="evidence" value="ECO:0007669"/>
    <property type="project" value="UniProtKB-UniRule"/>
</dbReference>
<dbReference type="GO" id="GO:0008821">
    <property type="term" value="F:crossover junction DNA endonuclease activity"/>
    <property type="evidence" value="ECO:0007669"/>
    <property type="project" value="UniProtKB-UniRule"/>
</dbReference>
<dbReference type="GO" id="GO:0003677">
    <property type="term" value="F:DNA binding"/>
    <property type="evidence" value="ECO:0007669"/>
    <property type="project" value="UniProtKB-KW"/>
</dbReference>
<dbReference type="GO" id="GO:0000287">
    <property type="term" value="F:magnesium ion binding"/>
    <property type="evidence" value="ECO:0007669"/>
    <property type="project" value="UniProtKB-UniRule"/>
</dbReference>
<dbReference type="GO" id="GO:0006310">
    <property type="term" value="P:DNA recombination"/>
    <property type="evidence" value="ECO:0007669"/>
    <property type="project" value="UniProtKB-UniRule"/>
</dbReference>
<dbReference type="GO" id="GO:0006281">
    <property type="term" value="P:DNA repair"/>
    <property type="evidence" value="ECO:0007669"/>
    <property type="project" value="UniProtKB-UniRule"/>
</dbReference>
<dbReference type="CDD" id="cd16962">
    <property type="entry name" value="RuvC"/>
    <property type="match status" value="1"/>
</dbReference>
<dbReference type="FunFam" id="3.30.420.10:FF:000002">
    <property type="entry name" value="Crossover junction endodeoxyribonuclease RuvC"/>
    <property type="match status" value="1"/>
</dbReference>
<dbReference type="Gene3D" id="3.30.420.10">
    <property type="entry name" value="Ribonuclease H-like superfamily/Ribonuclease H"/>
    <property type="match status" value="1"/>
</dbReference>
<dbReference type="HAMAP" id="MF_00034">
    <property type="entry name" value="RuvC"/>
    <property type="match status" value="1"/>
</dbReference>
<dbReference type="InterPro" id="IPR012337">
    <property type="entry name" value="RNaseH-like_sf"/>
</dbReference>
<dbReference type="InterPro" id="IPR036397">
    <property type="entry name" value="RNaseH_sf"/>
</dbReference>
<dbReference type="InterPro" id="IPR020563">
    <property type="entry name" value="X-over_junc_endoDNase_Mg_BS"/>
</dbReference>
<dbReference type="InterPro" id="IPR002176">
    <property type="entry name" value="X-over_junc_endoDNase_RuvC"/>
</dbReference>
<dbReference type="NCBIfam" id="TIGR00228">
    <property type="entry name" value="ruvC"/>
    <property type="match status" value="1"/>
</dbReference>
<dbReference type="PANTHER" id="PTHR30194">
    <property type="entry name" value="CROSSOVER JUNCTION ENDODEOXYRIBONUCLEASE RUVC"/>
    <property type="match status" value="1"/>
</dbReference>
<dbReference type="PANTHER" id="PTHR30194:SF3">
    <property type="entry name" value="CROSSOVER JUNCTION ENDODEOXYRIBONUCLEASE RUVC"/>
    <property type="match status" value="1"/>
</dbReference>
<dbReference type="Pfam" id="PF02075">
    <property type="entry name" value="RuvC"/>
    <property type="match status" value="1"/>
</dbReference>
<dbReference type="PRINTS" id="PR00696">
    <property type="entry name" value="RSOLVASERUVC"/>
</dbReference>
<dbReference type="SUPFAM" id="SSF53098">
    <property type="entry name" value="Ribonuclease H-like"/>
    <property type="match status" value="1"/>
</dbReference>
<dbReference type="PROSITE" id="PS01321">
    <property type="entry name" value="RUVC"/>
    <property type="match status" value="1"/>
</dbReference>
<accession>B1Z922</accession>
<feature type="chain" id="PRO_1000090537" description="Crossover junction endodeoxyribonuclease RuvC">
    <location>
        <begin position="1"/>
        <end position="189"/>
    </location>
</feature>
<feature type="active site" evidence="1">
    <location>
        <position position="11"/>
    </location>
</feature>
<feature type="active site" evidence="1">
    <location>
        <position position="71"/>
    </location>
</feature>
<feature type="active site" evidence="1">
    <location>
        <position position="143"/>
    </location>
</feature>
<feature type="binding site" evidence="1">
    <location>
        <position position="11"/>
    </location>
    <ligand>
        <name>Mg(2+)</name>
        <dbReference type="ChEBI" id="CHEBI:18420"/>
        <label>1</label>
    </ligand>
</feature>
<feature type="binding site" evidence="1">
    <location>
        <position position="71"/>
    </location>
    <ligand>
        <name>Mg(2+)</name>
        <dbReference type="ChEBI" id="CHEBI:18420"/>
        <label>2</label>
    </ligand>
</feature>
<feature type="binding site" evidence="1">
    <location>
        <position position="143"/>
    </location>
    <ligand>
        <name>Mg(2+)</name>
        <dbReference type="ChEBI" id="CHEBI:18420"/>
        <label>1</label>
    </ligand>
</feature>
<gene>
    <name evidence="1" type="primary">ruvC</name>
    <name type="ordered locus">Mpop_0902</name>
</gene>
<name>RUVC_METPB</name>